<proteinExistence type="evidence at transcript level"/>
<comment type="function">
    <text evidence="4 5">May be involved in early development in cAMP sensing and subsequent chemotactic response. Probable receptor of GABA and glutamate, leading respectively to the induction or inhibition of SDF-2 formation.</text>
</comment>
<comment type="subcellular location">
    <subcellularLocation>
        <location evidence="3">Membrane</location>
        <topology evidence="3">Multi-pass membrane protein</topology>
    </subcellularLocation>
</comment>
<comment type="developmental stage">
    <text evidence="3 4 5">Expressed throughout development. Expression is very low in vegetative cells and starts to accumulate in the first 2 hours after the initiation of development. It reaches a peak at 4 hours and then declines. However, a slightly larger transcript accumulates after 10 hours and remains until 22 hours of development.</text>
</comment>
<comment type="induction">
    <text evidence="6">Down-regulated by growth on bacteria.</text>
</comment>
<comment type="disruption phenotype">
    <text evidence="3 4">Cells grow faster, reach higher densities, exhibit delayed aggregates formation upon starvation and altered chemotaxis toward cAMP. Cells do not produce SDF-2 in response to GABA.</text>
</comment>
<comment type="similarity">
    <text evidence="7">Belongs to the G-protein coupled receptor 3 family.</text>
</comment>
<reference key="1">
    <citation type="journal article" date="2006" name="J. Biol. Chem.">
        <title>A metabotropic glutamate receptor family gene in Dictyostelium discoideum.</title>
        <authorList>
            <person name="Taniura H."/>
            <person name="Sanada N."/>
            <person name="Kuramoto N."/>
            <person name="Yoneda Y."/>
        </authorList>
    </citation>
    <scope>NUCLEOTIDE SEQUENCE [MRNA]</scope>
    <scope>SUBCELLULAR LOCATION</scope>
    <scope>DEVELOPMENTAL STAGE</scope>
    <scope>DISRUPTION PHENOTYPE</scope>
    <source>
        <strain>AX2</strain>
    </source>
</reference>
<reference key="2">
    <citation type="journal article" date="2005" name="Nature">
        <title>The genome of the social amoeba Dictyostelium discoideum.</title>
        <authorList>
            <person name="Eichinger L."/>
            <person name="Pachebat J.A."/>
            <person name="Gloeckner G."/>
            <person name="Rajandream M.A."/>
            <person name="Sucgang R."/>
            <person name="Berriman M."/>
            <person name="Song J."/>
            <person name="Olsen R."/>
            <person name="Szafranski K."/>
            <person name="Xu Q."/>
            <person name="Tunggal B."/>
            <person name="Kummerfeld S."/>
            <person name="Madera M."/>
            <person name="Konfortov B.A."/>
            <person name="Rivero F."/>
            <person name="Bankier A.T."/>
            <person name="Lehmann R."/>
            <person name="Hamlin N."/>
            <person name="Davies R."/>
            <person name="Gaudet P."/>
            <person name="Fey P."/>
            <person name="Pilcher K."/>
            <person name="Chen G."/>
            <person name="Saunders D."/>
            <person name="Sodergren E.J."/>
            <person name="Davis P."/>
            <person name="Kerhornou A."/>
            <person name="Nie X."/>
            <person name="Hall N."/>
            <person name="Anjard C."/>
            <person name="Hemphill L."/>
            <person name="Bason N."/>
            <person name="Farbrother P."/>
            <person name="Desany B."/>
            <person name="Just E."/>
            <person name="Morio T."/>
            <person name="Rost R."/>
            <person name="Churcher C.M."/>
            <person name="Cooper J."/>
            <person name="Haydock S."/>
            <person name="van Driessche N."/>
            <person name="Cronin A."/>
            <person name="Goodhead I."/>
            <person name="Muzny D.M."/>
            <person name="Mourier T."/>
            <person name="Pain A."/>
            <person name="Lu M."/>
            <person name="Harper D."/>
            <person name="Lindsay R."/>
            <person name="Hauser H."/>
            <person name="James K.D."/>
            <person name="Quiles M."/>
            <person name="Madan Babu M."/>
            <person name="Saito T."/>
            <person name="Buchrieser C."/>
            <person name="Wardroper A."/>
            <person name="Felder M."/>
            <person name="Thangavelu M."/>
            <person name="Johnson D."/>
            <person name="Knights A."/>
            <person name="Loulseged H."/>
            <person name="Mungall K.L."/>
            <person name="Oliver K."/>
            <person name="Price C."/>
            <person name="Quail M.A."/>
            <person name="Urushihara H."/>
            <person name="Hernandez J."/>
            <person name="Rabbinowitsch E."/>
            <person name="Steffen D."/>
            <person name="Sanders M."/>
            <person name="Ma J."/>
            <person name="Kohara Y."/>
            <person name="Sharp S."/>
            <person name="Simmonds M.N."/>
            <person name="Spiegler S."/>
            <person name="Tivey A."/>
            <person name="Sugano S."/>
            <person name="White B."/>
            <person name="Walker D."/>
            <person name="Woodward J.R."/>
            <person name="Winckler T."/>
            <person name="Tanaka Y."/>
            <person name="Shaulsky G."/>
            <person name="Schleicher M."/>
            <person name="Weinstock G.M."/>
            <person name="Rosenthal A."/>
            <person name="Cox E.C."/>
            <person name="Chisholm R.L."/>
            <person name="Gibbs R.A."/>
            <person name="Loomis W.F."/>
            <person name="Platzer M."/>
            <person name="Kay R.R."/>
            <person name="Williams J.G."/>
            <person name="Dear P.H."/>
            <person name="Noegel A.A."/>
            <person name="Barrell B.G."/>
            <person name="Kuspa A."/>
        </authorList>
    </citation>
    <scope>NUCLEOTIDE SEQUENCE [LARGE SCALE GENOMIC DNA]</scope>
    <source>
        <strain>AX4</strain>
    </source>
</reference>
<reference key="3">
    <citation type="journal article" date="2006" name="Development">
        <title>GABA induces terminal differentiation of Dictyostelium through a GABAB receptor.</title>
        <authorList>
            <person name="Anjard C."/>
            <person name="Loomis W.F."/>
        </authorList>
    </citation>
    <scope>DISRUPTION PHENOTYPE</scope>
    <scope>FUNCTION</scope>
    <scope>DEVELOPMENTAL STAGE</scope>
</reference>
<reference key="4">
    <citation type="journal article" date="2006" name="Eur. J. Cell Biol.">
        <title>The Dictyostelium repertoire of seven transmembrane domain receptors.</title>
        <authorList>
            <person name="Prabhu Y."/>
            <person name="Eichinger L."/>
        </authorList>
    </citation>
    <scope>NOMENCLATURE</scope>
</reference>
<reference key="5">
    <citation type="journal article" date="2007" name="BMC Dev. Biol.">
        <title>GrlJ, a Dictyostelium GABAB-like receptor with roles in post-aggregation development.</title>
        <authorList>
            <person name="Prabhu Y."/>
            <person name="Mueller R."/>
            <person name="Anjard C."/>
            <person name="Noegel A.A."/>
        </authorList>
    </citation>
    <scope>FUNCTION</scope>
    <scope>DEVELOPMENTAL STAGE</scope>
</reference>
<reference key="6">
    <citation type="journal article" date="2008" name="BMC Genomics">
        <title>Genome-wide transcriptional changes induced by phagocytosis or growth on bacteria in Dictyostelium.</title>
        <authorList>
            <person name="Sillo A."/>
            <person name="Bloomfield G."/>
            <person name="Balest A."/>
            <person name="Balbo A."/>
            <person name="Pergolizzi B."/>
            <person name="Peracino B."/>
            <person name="Skelton J."/>
            <person name="Ivens A."/>
            <person name="Bozzaro S."/>
        </authorList>
    </citation>
    <scope>INDUCTION [LARGE SCALE ANALYSIS]</scope>
</reference>
<name>GRLE_DICDI</name>
<organism>
    <name type="scientific">Dictyostelium discoideum</name>
    <name type="common">Social amoeba</name>
    <dbReference type="NCBI Taxonomy" id="44689"/>
    <lineage>
        <taxon>Eukaryota</taxon>
        <taxon>Amoebozoa</taxon>
        <taxon>Evosea</taxon>
        <taxon>Eumycetozoa</taxon>
        <taxon>Dictyostelia</taxon>
        <taxon>Dictyosteliales</taxon>
        <taxon>Dictyosteliaceae</taxon>
        <taxon>Dictyostelium</taxon>
    </lineage>
</organism>
<evidence type="ECO:0000255" key="1"/>
<evidence type="ECO:0000256" key="2">
    <source>
        <dbReference type="SAM" id="MobiDB-lite"/>
    </source>
</evidence>
<evidence type="ECO:0000269" key="3">
    <source>
    </source>
</evidence>
<evidence type="ECO:0000269" key="4">
    <source>
    </source>
</evidence>
<evidence type="ECO:0000269" key="5">
    <source>
    </source>
</evidence>
<evidence type="ECO:0000269" key="6">
    <source>
    </source>
</evidence>
<evidence type="ECO:0000305" key="7"/>
<feature type="signal peptide" evidence="1">
    <location>
        <begin position="1"/>
        <end position="27"/>
    </location>
</feature>
<feature type="chain" id="PRO_0000328377" description="Metabotropic glutamate receptor-like protein E">
    <location>
        <begin position="28"/>
        <end position="816"/>
    </location>
</feature>
<feature type="topological domain" description="Extracellular" evidence="1">
    <location>
        <begin position="28"/>
        <end position="436"/>
    </location>
</feature>
<feature type="transmembrane region" description="Helical; Name=1" evidence="1">
    <location>
        <begin position="437"/>
        <end position="457"/>
    </location>
</feature>
<feature type="topological domain" description="Cytoplasmic" evidence="1">
    <location>
        <begin position="458"/>
        <end position="469"/>
    </location>
</feature>
<feature type="transmembrane region" description="Helical; Name=2" evidence="1">
    <location>
        <begin position="470"/>
        <end position="490"/>
    </location>
</feature>
<feature type="topological domain" description="Extracellular" evidence="1">
    <location>
        <begin position="491"/>
        <end position="496"/>
    </location>
</feature>
<feature type="transmembrane region" description="Helical; Name=3" evidence="1">
    <location>
        <begin position="497"/>
        <end position="517"/>
    </location>
</feature>
<feature type="topological domain" description="Cytoplasmic" evidence="1">
    <location>
        <begin position="518"/>
        <end position="541"/>
    </location>
</feature>
<feature type="transmembrane region" description="Helical; Name=4" evidence="1">
    <location>
        <begin position="542"/>
        <end position="562"/>
    </location>
</feature>
<feature type="topological domain" description="Extracellular" evidence="1">
    <location>
        <begin position="563"/>
        <end position="590"/>
    </location>
</feature>
<feature type="transmembrane region" description="Helical; Name=5" evidence="1">
    <location>
        <begin position="591"/>
        <end position="611"/>
    </location>
</feature>
<feature type="topological domain" description="Cytoplasmic" evidence="1">
    <location>
        <begin position="612"/>
        <end position="625"/>
    </location>
</feature>
<feature type="transmembrane region" description="Helical; Name=6" evidence="1">
    <location>
        <begin position="626"/>
        <end position="646"/>
    </location>
</feature>
<feature type="topological domain" description="Extracellular" evidence="1">
    <location>
        <begin position="647"/>
        <end position="653"/>
    </location>
</feature>
<feature type="transmembrane region" description="Helical; Name=7" evidence="1">
    <location>
        <begin position="654"/>
        <end position="674"/>
    </location>
</feature>
<feature type="topological domain" description="Cytoplasmic" evidence="1">
    <location>
        <begin position="675"/>
        <end position="816"/>
    </location>
</feature>
<feature type="region of interest" description="Disordered" evidence="2">
    <location>
        <begin position="697"/>
        <end position="718"/>
    </location>
</feature>
<feature type="glycosylation site" description="N-linked (GlcNAc...) asparagine" evidence="1">
    <location>
        <position position="68"/>
    </location>
</feature>
<feature type="glycosylation site" description="N-linked (GlcNAc...) asparagine" evidence="1">
    <location>
        <position position="311"/>
    </location>
</feature>
<feature type="glycosylation site" description="N-linked (GlcNAc...) asparagine" evidence="1">
    <location>
        <position position="388"/>
    </location>
</feature>
<keyword id="KW-0145">Chemotaxis</keyword>
<keyword id="KW-0297">G-protein coupled receptor</keyword>
<keyword id="KW-0325">Glycoprotein</keyword>
<keyword id="KW-0472">Membrane</keyword>
<keyword id="KW-0675">Receptor</keyword>
<keyword id="KW-1185">Reference proteome</keyword>
<keyword id="KW-0732">Signal</keyword>
<keyword id="KW-0807">Transducer</keyword>
<keyword id="KW-0812">Transmembrane</keyword>
<keyword id="KW-1133">Transmembrane helix</keyword>
<protein>
    <recommendedName>
        <fullName>Metabotropic glutamate receptor-like protein E</fullName>
    </recommendedName>
    <alternativeName>
        <fullName>DdmGluPR</fullName>
    </alternativeName>
    <alternativeName>
        <fullName>GABA-B receptor-like protein grlE</fullName>
    </alternativeName>
</protein>
<accession>Q54ET0</accession>
<accession>Q1PDD1</accession>
<gene>
    <name type="primary">grlE</name>
    <name type="synonym">GluPR</name>
    <name type="ORF">DDB_G0291356</name>
</gene>
<dbReference type="EMBL" id="DQ447637">
    <property type="protein sequence ID" value="ABE02692.1"/>
    <property type="molecule type" value="mRNA"/>
</dbReference>
<dbReference type="EMBL" id="AAFI02000177">
    <property type="protein sequence ID" value="EAL61662.1"/>
    <property type="molecule type" value="Genomic_DNA"/>
</dbReference>
<dbReference type="RefSeq" id="XP_635160.1">
    <property type="nucleotide sequence ID" value="XM_630068.1"/>
</dbReference>
<dbReference type="SMR" id="Q54ET0"/>
<dbReference type="FunCoup" id="Q54ET0">
    <property type="interactions" value="28"/>
</dbReference>
<dbReference type="STRING" id="44689.Q54ET0"/>
<dbReference type="TCDB" id="9.A.14.15.3">
    <property type="family name" value="the g-protein-coupled receptor (gpcr) family"/>
</dbReference>
<dbReference type="GlyCosmos" id="Q54ET0">
    <property type="glycosylation" value="3 sites, No reported glycans"/>
</dbReference>
<dbReference type="GlyGen" id="Q54ET0">
    <property type="glycosylation" value="3 sites"/>
</dbReference>
<dbReference type="PaxDb" id="44689-DDB0231976"/>
<dbReference type="EnsemblProtists" id="EAL61662">
    <property type="protein sequence ID" value="EAL61662"/>
    <property type="gene ID" value="DDB_G0291356"/>
</dbReference>
<dbReference type="GeneID" id="8628106"/>
<dbReference type="KEGG" id="ddi:DDB_G0291356"/>
<dbReference type="dictyBase" id="DDB_G0291356">
    <property type="gene designation" value="grlE"/>
</dbReference>
<dbReference type="VEuPathDB" id="AmoebaDB:DDB_G0291356"/>
<dbReference type="eggNOG" id="KOG1055">
    <property type="taxonomic scope" value="Eukaryota"/>
</dbReference>
<dbReference type="InParanoid" id="Q54ET0"/>
<dbReference type="PhylomeDB" id="Q54ET0"/>
<dbReference type="Reactome" id="R-DDI-418594">
    <property type="pathway name" value="G alpha (i) signalling events"/>
</dbReference>
<dbReference type="Reactome" id="R-DDI-420499">
    <property type="pathway name" value="Class C/3 (Metabotropic glutamate/pheromone receptors)"/>
</dbReference>
<dbReference type="Reactome" id="R-DDI-977444">
    <property type="pathway name" value="GABA B receptor activation"/>
</dbReference>
<dbReference type="PRO" id="PR:Q54ET0"/>
<dbReference type="Proteomes" id="UP000002195">
    <property type="component" value="Chromosome 6"/>
</dbReference>
<dbReference type="GO" id="GO:0038039">
    <property type="term" value="C:G protein-coupled receptor heterodimeric complex"/>
    <property type="evidence" value="ECO:0000318"/>
    <property type="project" value="GO_Central"/>
</dbReference>
<dbReference type="GO" id="GO:0005886">
    <property type="term" value="C:plasma membrane"/>
    <property type="evidence" value="ECO:0000314"/>
    <property type="project" value="dictyBase"/>
</dbReference>
<dbReference type="GO" id="GO:0004965">
    <property type="term" value="F:G protein-coupled GABA receptor activity"/>
    <property type="evidence" value="ECO:0000315"/>
    <property type="project" value="dictyBase"/>
</dbReference>
<dbReference type="GO" id="GO:0016595">
    <property type="term" value="F:glutamate binding"/>
    <property type="evidence" value="ECO:0000314"/>
    <property type="project" value="dictyBase"/>
</dbReference>
<dbReference type="GO" id="GO:0008066">
    <property type="term" value="F:glutamate receptor activity"/>
    <property type="evidence" value="ECO:0000315"/>
    <property type="project" value="dictyBase"/>
</dbReference>
<dbReference type="GO" id="GO:0031152">
    <property type="term" value="P:aggregation involved in sorocarp development"/>
    <property type="evidence" value="ECO:0000315"/>
    <property type="project" value="dictyBase"/>
</dbReference>
<dbReference type="GO" id="GO:0043327">
    <property type="term" value="P:chemotaxis to cAMP"/>
    <property type="evidence" value="ECO:0000315"/>
    <property type="project" value="dictyBase"/>
</dbReference>
<dbReference type="GO" id="GO:0007214">
    <property type="term" value="P:gamma-aminobutyric acid signaling pathway"/>
    <property type="evidence" value="ECO:0000315"/>
    <property type="project" value="dictyBase"/>
</dbReference>
<dbReference type="GO" id="GO:1901261">
    <property type="term" value="P:regulation of sorocarp spore cell differentiation"/>
    <property type="evidence" value="ECO:0000315"/>
    <property type="project" value="dictyBase"/>
</dbReference>
<dbReference type="CDD" id="cd15047">
    <property type="entry name" value="7tmC_GABA-B-like"/>
    <property type="match status" value="1"/>
</dbReference>
<dbReference type="CDD" id="cd06350">
    <property type="entry name" value="PBP1_GPCR_family_C-like"/>
    <property type="match status" value="1"/>
</dbReference>
<dbReference type="FunFam" id="3.40.50.2300:FF:001140">
    <property type="match status" value="1"/>
</dbReference>
<dbReference type="Gene3D" id="3.40.50.2300">
    <property type="match status" value="3"/>
</dbReference>
<dbReference type="InterPro" id="IPR001828">
    <property type="entry name" value="ANF_lig-bd_rcpt"/>
</dbReference>
<dbReference type="InterPro" id="IPR002455">
    <property type="entry name" value="GPCR3_GABA-B"/>
</dbReference>
<dbReference type="InterPro" id="IPR000337">
    <property type="entry name" value="GPCR_3"/>
</dbReference>
<dbReference type="InterPro" id="IPR017978">
    <property type="entry name" value="GPCR_3_C"/>
</dbReference>
<dbReference type="InterPro" id="IPR028082">
    <property type="entry name" value="Peripla_BP_I"/>
</dbReference>
<dbReference type="PANTHER" id="PTHR10519:SF20">
    <property type="entry name" value="G-PROTEIN COUPLED RECEPTOR 156-RELATED"/>
    <property type="match status" value="1"/>
</dbReference>
<dbReference type="PANTHER" id="PTHR10519">
    <property type="entry name" value="GABA-B RECEPTOR"/>
    <property type="match status" value="1"/>
</dbReference>
<dbReference type="Pfam" id="PF00003">
    <property type="entry name" value="7tm_3"/>
    <property type="match status" value="1"/>
</dbReference>
<dbReference type="Pfam" id="PF01094">
    <property type="entry name" value="ANF_receptor"/>
    <property type="match status" value="1"/>
</dbReference>
<dbReference type="PRINTS" id="PR01176">
    <property type="entry name" value="GABABRECEPTR"/>
</dbReference>
<dbReference type="PRINTS" id="PR00248">
    <property type="entry name" value="GPCRMGR"/>
</dbReference>
<dbReference type="SUPFAM" id="SSF53822">
    <property type="entry name" value="Periplasmic binding protein-like I"/>
    <property type="match status" value="1"/>
</dbReference>
<dbReference type="PROSITE" id="PS50259">
    <property type="entry name" value="G_PROTEIN_RECEP_F3_4"/>
    <property type="match status" value="1"/>
</dbReference>
<sequence length="816" mass="89935">MKIKIGNILKNVVILVIFSLFISKINSEVVKPNPAKPDELVIAFMSPYFDPEYTQYSGAAEYALSKFNETFKTKYSKTIKLHTFTDTNDVIDSLDLVTMPVNGIVGPAYSGSSSTACLVFGAFAVPSISFYATGASLSNSGSYPYFQRVMPDDRLQVQAILSLLKKNGWTRVSCIHTNEDYGNGGADQLVQQSNAQGITVNTNQAIDPVDNGIAPEQLYYDIVFDNLEAAKSRVIVLYALFPPDCLEIWKQAKARGFLGEGFTWIVTDGCAELTGGTDPDLLGVLATFPSYGLGTEAYTDFERTIVNDYNNNTGDAFYKGASFSYDATYAMLMGIEAVLAKGGDPWDGEQVRTELRNLKFNGITGTIAFDKNTGDRLYGEFALLNLINSTKGSFDPIGKINPDSGEITLKSDILYSGPTYKVPSDYQVVVFDRTLNIVLGVITGVCVLIVIGIGSVIALQWRKFRYSSPLFCMFIIIGALMGLASVFTLLPTPTTPLCSGFPWLLGLGYVIVFGTLFTKTWRTWRLFSNARKFKIIRITNKFIITLVGGFVLLESIFMIIWTAVDRPIPLAEPIFKAGEAQLQCTSDSEAWWYVFVFYKVFYILFGVFLAFKTRNVVDSLNESKPITLALYNLTFVMVVAIALGFILRDNPIAIIVIQTIAILLGFTVTVSVLFLPKVWMILSGQQHSMDSIGTSMDSMGRSNGNTTEAESTRGYTNKDYNNQSVGRSFSAHATGFKDVAPSNHPQLGIVYTGGDNFPRVGSSQTAASRSEAEINVSKDVLAKANKKNEEEFGEFFLKPSEDNILKKKKKKKNNNK</sequence>